<proteinExistence type="evidence at transcript level"/>
<gene>
    <name type="primary">ureF</name>
</gene>
<evidence type="ECO:0000250" key="1"/>
<evidence type="ECO:0000269" key="2">
    <source>
    </source>
</evidence>
<evidence type="ECO:0000305" key="3"/>
<protein>
    <recommendedName>
        <fullName>Urease accessory protein UreF</fullName>
    </recommendedName>
</protein>
<geneLocation type="plasmid"/>
<feature type="chain" id="PRO_0000067646" description="Urease accessory protein UreF">
    <location>
        <begin position="1" status="less than"/>
        <end position="60"/>
    </location>
</feature>
<feature type="non-terminal residue">
    <location>
        <position position="1"/>
    </location>
</feature>
<name>UREF_ECOLX</name>
<sequence>KLIPLGQSAGQNILFTLAERIPEVVAQSAIWPLDDIGSFTPAQIIASSRHETQYTRLFRS</sequence>
<organism>
    <name type="scientific">Escherichia coli</name>
    <dbReference type="NCBI Taxonomy" id="562"/>
    <lineage>
        <taxon>Bacteria</taxon>
        <taxon>Pseudomonadati</taxon>
        <taxon>Pseudomonadota</taxon>
        <taxon>Gammaproteobacteria</taxon>
        <taxon>Enterobacterales</taxon>
        <taxon>Enterobacteriaceae</taxon>
        <taxon>Escherichia</taxon>
    </lineage>
</organism>
<reference key="1">
    <citation type="journal article" date="1993" name="J. Bacteriol.">
        <title>Characterization of a plasmid-encoded urease gene cluster found in members of the family Enterobacteriaceae.</title>
        <authorList>
            <person name="D'Orazio S.E."/>
            <person name="Collins C.M."/>
        </authorList>
    </citation>
    <scope>NUCLEOTIDE SEQUENCE [GENOMIC DNA]</scope>
    <scope>INDUCTION</scope>
    <source>
        <strain>1440 / UPEC</strain>
    </source>
</reference>
<comment type="function">
    <text evidence="1">Required for maturation of urease via the functional incorporation of the urease nickel metallocenter.</text>
</comment>
<comment type="subunit">
    <text evidence="1">UreD, UreF and UreG form a complex that acts as a GTP-hydrolysis-dependent molecular chaperone, activating the urease apoprotein by helping to assemble the nickel containing metallocenter of UreC. The UreE protein probably delivers the nickel (By similarity).</text>
</comment>
<comment type="subcellular location">
    <subcellularLocation>
        <location evidence="1">Cytoplasm</location>
    </subcellularLocation>
</comment>
<comment type="induction">
    <text evidence="2">The probable operon is induced by urea.</text>
</comment>
<comment type="similarity">
    <text evidence="3">Belongs to the UreF family.</text>
</comment>
<accession>Q03286</accession>
<dbReference type="EMBL" id="L03308">
    <property type="protein sequence ID" value="AAA24748.1"/>
    <property type="molecule type" value="Genomic_DNA"/>
</dbReference>
<dbReference type="SMR" id="Q03286"/>
<dbReference type="GO" id="GO:0005737">
    <property type="term" value="C:cytoplasm"/>
    <property type="evidence" value="ECO:0007669"/>
    <property type="project" value="UniProtKB-SubCell"/>
</dbReference>
<keyword id="KW-0143">Chaperone</keyword>
<keyword id="KW-0963">Cytoplasm</keyword>
<keyword id="KW-0996">Nickel insertion</keyword>
<keyword id="KW-0614">Plasmid</keyword>